<dbReference type="EC" id="7.1.1.9"/>
<dbReference type="EMBL" id="AF030463">
    <property type="protein sequence ID" value="AAB93602.1"/>
    <property type="molecule type" value="Genomic_DNA"/>
</dbReference>
<dbReference type="SMR" id="O47698"/>
<dbReference type="GO" id="GO:0005743">
    <property type="term" value="C:mitochondrial inner membrane"/>
    <property type="evidence" value="ECO:0007669"/>
    <property type="project" value="UniProtKB-SubCell"/>
</dbReference>
<dbReference type="GO" id="GO:0045277">
    <property type="term" value="C:respiratory chain complex IV"/>
    <property type="evidence" value="ECO:0000250"/>
    <property type="project" value="UniProtKB"/>
</dbReference>
<dbReference type="GO" id="GO:0004129">
    <property type="term" value="F:cytochrome-c oxidase activity"/>
    <property type="evidence" value="ECO:0007669"/>
    <property type="project" value="UniProtKB-EC"/>
</dbReference>
<dbReference type="GO" id="GO:0006123">
    <property type="term" value="P:mitochondrial electron transport, cytochrome c to oxygen"/>
    <property type="evidence" value="ECO:0007669"/>
    <property type="project" value="TreeGrafter"/>
</dbReference>
<dbReference type="GO" id="GO:0008535">
    <property type="term" value="P:respiratory chain complex IV assembly"/>
    <property type="evidence" value="ECO:0000250"/>
    <property type="project" value="UniProtKB"/>
</dbReference>
<dbReference type="CDD" id="cd01665">
    <property type="entry name" value="Cyt_c_Oxidase_III"/>
    <property type="match status" value="1"/>
</dbReference>
<dbReference type="FunFam" id="1.10.287.70:FF:000048">
    <property type="entry name" value="Cytochrome c oxidase subunit 3"/>
    <property type="match status" value="1"/>
</dbReference>
<dbReference type="FunFam" id="1.20.120.80:FF:000002">
    <property type="entry name" value="Cytochrome c oxidase subunit 3"/>
    <property type="match status" value="1"/>
</dbReference>
<dbReference type="Gene3D" id="1.10.287.70">
    <property type="match status" value="1"/>
</dbReference>
<dbReference type="Gene3D" id="1.20.120.80">
    <property type="entry name" value="Cytochrome c oxidase, subunit III, four-helix bundle"/>
    <property type="match status" value="1"/>
</dbReference>
<dbReference type="InterPro" id="IPR024791">
    <property type="entry name" value="Cyt_c/ubiquinol_Oxase_su3"/>
</dbReference>
<dbReference type="InterPro" id="IPR033945">
    <property type="entry name" value="Cyt_c_oxase_su3_dom"/>
</dbReference>
<dbReference type="InterPro" id="IPR000298">
    <property type="entry name" value="Cyt_c_oxidase-like_su3"/>
</dbReference>
<dbReference type="InterPro" id="IPR035973">
    <property type="entry name" value="Cyt_c_oxidase_su3-like_sf"/>
</dbReference>
<dbReference type="InterPro" id="IPR013833">
    <property type="entry name" value="Cyt_c_oxidase_su3_a-hlx"/>
</dbReference>
<dbReference type="PANTHER" id="PTHR11403:SF7">
    <property type="entry name" value="CYTOCHROME C OXIDASE SUBUNIT 3"/>
    <property type="match status" value="1"/>
</dbReference>
<dbReference type="PANTHER" id="PTHR11403">
    <property type="entry name" value="CYTOCHROME C OXIDASE SUBUNIT III"/>
    <property type="match status" value="1"/>
</dbReference>
<dbReference type="Pfam" id="PF00510">
    <property type="entry name" value="COX3"/>
    <property type="match status" value="1"/>
</dbReference>
<dbReference type="SUPFAM" id="SSF81452">
    <property type="entry name" value="Cytochrome c oxidase subunit III-like"/>
    <property type="match status" value="1"/>
</dbReference>
<dbReference type="PROSITE" id="PS50253">
    <property type="entry name" value="COX3"/>
    <property type="match status" value="1"/>
</dbReference>
<sequence length="261" mass="29804">MTHQTHAYHMVNPSPWPLTGALSALLMTSGLAMWFHFNSVTLLTLGLTTNMLTMYQWWRDIIRESTFQGHHTPTVQKGLRYGMILFIISEVLFFTGFFWAFYHSSLAPTPELGGCWPPTGISPLNPLEVPLLNTSVLLASGVSITWAHHSLMEGNRNHMLQALFITIALGVYFTLLQASEYYEAPFTISDGIYGSTFFVATGFHGLHVIIGSTFLIVCFFRQLKFHFTSNHHFGFEAAAWYWHFVDVVWLFLYVSIYWWGS</sequence>
<accession>O47698</accession>
<reference key="1">
    <citation type="journal article" date="1999" name="Mol. Phylogenet. Evol.">
        <title>Phylogenetic relationships in the bovid subfamily Antilopinae based on mitochondrial DNA sequences.</title>
        <authorList>
            <person name="Rebholz W.E.R."/>
            <person name="Harley E.H."/>
        </authorList>
    </citation>
    <scope>NUCLEOTIDE SEQUENCE [GENOMIC DNA]</scope>
</reference>
<proteinExistence type="inferred from homology"/>
<organism>
    <name type="scientific">Neotragus moschatus</name>
    <name type="common">Suni</name>
    <dbReference type="NCBI Taxonomy" id="66442"/>
    <lineage>
        <taxon>Eukaryota</taxon>
        <taxon>Metazoa</taxon>
        <taxon>Chordata</taxon>
        <taxon>Craniata</taxon>
        <taxon>Vertebrata</taxon>
        <taxon>Euteleostomi</taxon>
        <taxon>Mammalia</taxon>
        <taxon>Eutheria</taxon>
        <taxon>Laurasiatheria</taxon>
        <taxon>Artiodactyla</taxon>
        <taxon>Ruminantia</taxon>
        <taxon>Pecora</taxon>
        <taxon>Bovidae</taxon>
        <taxon>Antilopinae</taxon>
        <taxon>Neotragus</taxon>
    </lineage>
</organism>
<gene>
    <name type="primary">MT-CO3</name>
    <name type="synonym">COIII</name>
    <name type="synonym">COXIII</name>
    <name type="synonym">MTCO3</name>
</gene>
<name>COX3_NEOMO</name>
<comment type="function">
    <text evidence="2">Component of the cytochrome c oxidase, the last enzyme in the mitochondrial electron transport chain which drives oxidative phosphorylation. The respiratory chain contains 3 multisubunit complexes succinate dehydrogenase (complex II, CII), ubiquinol-cytochrome c oxidoreductase (cytochrome b-c1 complex, complex III, CIII) and cytochrome c oxidase (complex IV, CIV), that cooperate to transfer electrons derived from NADH and succinate to molecular oxygen, creating an electrochemical gradient over the inner membrane that drives transmembrane transport and the ATP synthase. Cytochrome c oxidase is the component of the respiratory chain that catalyzes the reduction of oxygen to water. Electrons originating from reduced cytochrome c in the intermembrane space (IMS) are transferred via the dinuclear copper A center (CU(A)) of subunit 2 and heme A of subunit 1 to the active site in subunit 1, a binuclear center (BNC) formed by heme A3 and copper B (CU(B)). The BNC reduces molecular oxygen to 2 water molecules using 4 electrons from cytochrome c in the IMS and 4 protons from the mitochondrial matrix.</text>
</comment>
<comment type="catalytic activity">
    <reaction evidence="2">
        <text>4 Fe(II)-[cytochrome c] + O2 + 8 H(+)(in) = 4 Fe(III)-[cytochrome c] + 2 H2O + 4 H(+)(out)</text>
        <dbReference type="Rhea" id="RHEA:11436"/>
        <dbReference type="Rhea" id="RHEA-COMP:10350"/>
        <dbReference type="Rhea" id="RHEA-COMP:14399"/>
        <dbReference type="ChEBI" id="CHEBI:15377"/>
        <dbReference type="ChEBI" id="CHEBI:15378"/>
        <dbReference type="ChEBI" id="CHEBI:15379"/>
        <dbReference type="ChEBI" id="CHEBI:29033"/>
        <dbReference type="ChEBI" id="CHEBI:29034"/>
        <dbReference type="EC" id="7.1.1.9"/>
    </reaction>
    <physiologicalReaction direction="left-to-right" evidence="2">
        <dbReference type="Rhea" id="RHEA:11437"/>
    </physiologicalReaction>
</comment>
<comment type="subunit">
    <text evidence="1">Component of the cytochrome c oxidase (complex IV, CIV), a multisubunit enzyme composed of 14 subunits. The complex is composed of a catalytic core of 3 subunits MT-CO1, MT-CO2 and MT-CO3, encoded in the mitochondrial DNA, and 11 supernumerary subunits COX4I, COX5A, COX5B, COX6A, COX6B, COX6C, COX7A, COX7B, COX7C, COX8 and NDUFA4, which are encoded in the nuclear genome. The complex exists as a monomer or a dimer and forms supercomplexes (SCs) in the inner mitochondrial membrane with NADH-ubiquinone oxidoreductase (complex I, CI) and ubiquinol-cytochrome c oxidoreductase (cytochrome b-c1 complex, complex III, CIII), resulting in different assemblies (supercomplex SCI(1)III(2)IV(1) and megacomplex MCI(2)III(2)IV(2)).</text>
</comment>
<comment type="subcellular location">
    <subcellularLocation>
        <location evidence="1">Mitochondrion inner membrane</location>
        <topology evidence="1">Multi-pass membrane protein</topology>
    </subcellularLocation>
</comment>
<comment type="similarity">
    <text evidence="3">Belongs to the cytochrome c oxidase subunit 3 family.</text>
</comment>
<evidence type="ECO:0000250" key="1">
    <source>
        <dbReference type="UniProtKB" id="P00415"/>
    </source>
</evidence>
<evidence type="ECO:0000250" key="2">
    <source>
        <dbReference type="UniProtKB" id="P00420"/>
    </source>
</evidence>
<evidence type="ECO:0000305" key="3"/>
<feature type="chain" id="PRO_0000183812" description="Cytochrome c oxidase subunit 3">
    <location>
        <begin position="1"/>
        <end position="261"/>
    </location>
</feature>
<feature type="topological domain" description="Mitochondrial matrix" evidence="1">
    <location>
        <begin position="1"/>
        <end position="15"/>
    </location>
</feature>
<feature type="transmembrane region" description="Helical; Name=I" evidence="1">
    <location>
        <begin position="16"/>
        <end position="34"/>
    </location>
</feature>
<feature type="topological domain" description="Mitochondrial intermembrane" evidence="1">
    <location>
        <begin position="35"/>
        <end position="40"/>
    </location>
</feature>
<feature type="transmembrane region" description="Helical; Name=II" evidence="1">
    <location>
        <begin position="41"/>
        <end position="66"/>
    </location>
</feature>
<feature type="topological domain" description="Mitochondrial matrix" evidence="1">
    <location>
        <begin position="67"/>
        <end position="72"/>
    </location>
</feature>
<feature type="transmembrane region" description="Helical; Name=III" evidence="1">
    <location>
        <begin position="73"/>
        <end position="105"/>
    </location>
</feature>
<feature type="topological domain" description="Mitochondrial intermembrane" evidence="1">
    <location>
        <begin position="106"/>
        <end position="128"/>
    </location>
</feature>
<feature type="transmembrane region" description="Helical; Name=IV" evidence="1">
    <location>
        <begin position="129"/>
        <end position="152"/>
    </location>
</feature>
<feature type="topological domain" description="Mitochondrial matrix" evidence="1">
    <location>
        <begin position="153"/>
        <end position="155"/>
    </location>
</feature>
<feature type="transmembrane region" description="Helical; Name=V" evidence="1">
    <location>
        <begin position="156"/>
        <end position="183"/>
    </location>
</feature>
<feature type="topological domain" description="Mitochondrial intermembrane" evidence="1">
    <location>
        <begin position="184"/>
        <end position="190"/>
    </location>
</feature>
<feature type="transmembrane region" description="Helical; Name=VI" evidence="1">
    <location>
        <begin position="191"/>
        <end position="223"/>
    </location>
</feature>
<feature type="topological domain" description="Mitochondrial matrix" evidence="1">
    <location>
        <begin position="224"/>
        <end position="232"/>
    </location>
</feature>
<feature type="transmembrane region" description="Helical; Name=VII" evidence="1">
    <location>
        <begin position="233"/>
        <end position="256"/>
    </location>
</feature>
<feature type="topological domain" description="Mitochondrial intermembrane" evidence="1">
    <location>
        <begin position="257"/>
        <end position="261"/>
    </location>
</feature>
<protein>
    <recommendedName>
        <fullName>Cytochrome c oxidase subunit 3</fullName>
        <ecNumber>7.1.1.9</ecNumber>
    </recommendedName>
    <alternativeName>
        <fullName>Cytochrome c oxidase polypeptide III</fullName>
    </alternativeName>
</protein>
<geneLocation type="mitochondrion"/>
<keyword id="KW-0472">Membrane</keyword>
<keyword id="KW-0496">Mitochondrion</keyword>
<keyword id="KW-0999">Mitochondrion inner membrane</keyword>
<keyword id="KW-1278">Translocase</keyword>
<keyword id="KW-0812">Transmembrane</keyword>
<keyword id="KW-1133">Transmembrane helix</keyword>